<feature type="chain" id="PRO_0000413175" description="Putative uncharacterized protein AN10176">
    <location>
        <begin position="1"/>
        <end position="60"/>
    </location>
</feature>
<organism>
    <name type="scientific">Emericella nidulans (strain FGSC A4 / ATCC 38163 / CBS 112.46 / NRRL 194 / M139)</name>
    <name type="common">Aspergillus nidulans</name>
    <dbReference type="NCBI Taxonomy" id="227321"/>
    <lineage>
        <taxon>Eukaryota</taxon>
        <taxon>Fungi</taxon>
        <taxon>Dikarya</taxon>
        <taxon>Ascomycota</taxon>
        <taxon>Pezizomycotina</taxon>
        <taxon>Eurotiomycetes</taxon>
        <taxon>Eurotiomycetidae</taxon>
        <taxon>Eurotiales</taxon>
        <taxon>Aspergillaceae</taxon>
        <taxon>Aspergillus</taxon>
        <taxon>Aspergillus subgen. Nidulantes</taxon>
    </lineage>
</organism>
<name>Y0176_EMENI</name>
<keyword id="KW-1185">Reference proteome</keyword>
<gene>
    <name type="ORF">AN10176</name>
</gene>
<sequence length="60" mass="6885">MGDGMRRLSRAHRCRIGCFEPGLRVRMVGISSLKDIDGAVVLNSDKHLDPHWRRQEPRMA</sequence>
<accession>C8VSE8</accession>
<accession>Q5BDU1</accession>
<reference key="1">
    <citation type="journal article" date="2005" name="Nature">
        <title>Sequencing of Aspergillus nidulans and comparative analysis with A. fumigatus and A. oryzae.</title>
        <authorList>
            <person name="Galagan J.E."/>
            <person name="Calvo S.E."/>
            <person name="Cuomo C."/>
            <person name="Ma L.-J."/>
            <person name="Wortman J.R."/>
            <person name="Batzoglou S."/>
            <person name="Lee S.-I."/>
            <person name="Bastuerkmen M."/>
            <person name="Spevak C.C."/>
            <person name="Clutterbuck J."/>
            <person name="Kapitonov V."/>
            <person name="Jurka J."/>
            <person name="Scazzocchio C."/>
            <person name="Farman M.L."/>
            <person name="Butler J."/>
            <person name="Purcell S."/>
            <person name="Harris S."/>
            <person name="Braus G.H."/>
            <person name="Draht O."/>
            <person name="Busch S."/>
            <person name="D'Enfert C."/>
            <person name="Bouchier C."/>
            <person name="Goldman G.H."/>
            <person name="Bell-Pedersen D."/>
            <person name="Griffiths-Jones S."/>
            <person name="Doonan J.H."/>
            <person name="Yu J."/>
            <person name="Vienken K."/>
            <person name="Pain A."/>
            <person name="Freitag M."/>
            <person name="Selker E.U."/>
            <person name="Archer D.B."/>
            <person name="Penalva M.A."/>
            <person name="Oakley B.R."/>
            <person name="Momany M."/>
            <person name="Tanaka T."/>
            <person name="Kumagai T."/>
            <person name="Asai K."/>
            <person name="Machida M."/>
            <person name="Nierman W.C."/>
            <person name="Denning D.W."/>
            <person name="Caddick M.X."/>
            <person name="Hynes M."/>
            <person name="Paoletti M."/>
            <person name="Fischer R."/>
            <person name="Miller B.L."/>
            <person name="Dyer P.S."/>
            <person name="Sachs M.S."/>
            <person name="Osmani S.A."/>
            <person name="Birren B.W."/>
        </authorList>
    </citation>
    <scope>NUCLEOTIDE SEQUENCE [LARGE SCALE GENOMIC DNA]</scope>
    <source>
        <strain>FGSC A4 / ATCC 38163 / CBS 112.46 / NRRL 194 / M139</strain>
    </source>
</reference>
<reference key="2">
    <citation type="journal article" date="2009" name="Fungal Genet. Biol.">
        <title>The 2008 update of the Aspergillus nidulans genome annotation: a community effort.</title>
        <authorList>
            <person name="Wortman J.R."/>
            <person name="Gilsenan J.M."/>
            <person name="Joardar V."/>
            <person name="Deegan J."/>
            <person name="Clutterbuck J."/>
            <person name="Andersen M.R."/>
            <person name="Archer D."/>
            <person name="Bencina M."/>
            <person name="Braus G."/>
            <person name="Coutinho P."/>
            <person name="von Dohren H."/>
            <person name="Doonan J."/>
            <person name="Driessen A.J."/>
            <person name="Durek P."/>
            <person name="Espeso E."/>
            <person name="Fekete E."/>
            <person name="Flipphi M."/>
            <person name="Estrada C.G."/>
            <person name="Geysens S."/>
            <person name="Goldman G."/>
            <person name="de Groot P.W."/>
            <person name="Hansen K."/>
            <person name="Harris S.D."/>
            <person name="Heinekamp T."/>
            <person name="Helmstaedt K."/>
            <person name="Henrissat B."/>
            <person name="Hofmann G."/>
            <person name="Homan T."/>
            <person name="Horio T."/>
            <person name="Horiuchi H."/>
            <person name="James S."/>
            <person name="Jones M."/>
            <person name="Karaffa L."/>
            <person name="Karanyi Z."/>
            <person name="Kato M."/>
            <person name="Keller N."/>
            <person name="Kelly D.E."/>
            <person name="Kiel J.A."/>
            <person name="Kim J.M."/>
            <person name="van der Klei I.J."/>
            <person name="Klis F.M."/>
            <person name="Kovalchuk A."/>
            <person name="Krasevec N."/>
            <person name="Kubicek C.P."/>
            <person name="Liu B."/>
            <person name="Maccabe A."/>
            <person name="Meyer V."/>
            <person name="Mirabito P."/>
            <person name="Miskei M."/>
            <person name="Mos M."/>
            <person name="Mullins J."/>
            <person name="Nelson D.R."/>
            <person name="Nielsen J."/>
            <person name="Oakley B.R."/>
            <person name="Osmani S.A."/>
            <person name="Pakula T."/>
            <person name="Paszewski A."/>
            <person name="Paulsen I."/>
            <person name="Pilsyk S."/>
            <person name="Pocsi I."/>
            <person name="Punt P.J."/>
            <person name="Ram A.F."/>
            <person name="Ren Q."/>
            <person name="Robellet X."/>
            <person name="Robson G."/>
            <person name="Seiboth B."/>
            <person name="van Solingen P."/>
            <person name="Specht T."/>
            <person name="Sun J."/>
            <person name="Taheri-Talesh N."/>
            <person name="Takeshita N."/>
            <person name="Ussery D."/>
            <person name="vanKuyk P.A."/>
            <person name="Visser H."/>
            <person name="van de Vondervoort P.J."/>
            <person name="de Vries R.P."/>
            <person name="Walton J."/>
            <person name="Xiang X."/>
            <person name="Xiong Y."/>
            <person name="Zeng A.P."/>
            <person name="Brandt B.W."/>
            <person name="Cornell M.J."/>
            <person name="van den Hondel C.A."/>
            <person name="Visser J."/>
            <person name="Oliver S.G."/>
            <person name="Turner G."/>
        </authorList>
    </citation>
    <scope>GENOME REANNOTATION</scope>
    <source>
        <strain>FGSC A4 / ATCC 38163 / CBS 112.46 / NRRL 194 / M139</strain>
    </source>
</reference>
<evidence type="ECO:0000305" key="1"/>
<dbReference type="EMBL" id="AACD01000017">
    <property type="protein sequence ID" value="EAA65882.1"/>
    <property type="status" value="ALT_SEQ"/>
    <property type="molecule type" value="Genomic_DNA"/>
</dbReference>
<dbReference type="EMBL" id="BN001308">
    <property type="protein sequence ID" value="CBF87785.1"/>
    <property type="molecule type" value="Genomic_DNA"/>
</dbReference>
<dbReference type="RefSeq" id="XP_658893.1">
    <property type="nucleotide sequence ID" value="XM_653801.1"/>
</dbReference>
<dbReference type="EnsemblFungi" id="CBF87785">
    <property type="protein sequence ID" value="CBF87785"/>
    <property type="gene ID" value="ANIA_10176"/>
</dbReference>
<dbReference type="KEGG" id="ani:ANIA_10171"/>
<dbReference type="VEuPathDB" id="FungiDB:AN10176"/>
<dbReference type="HOGENOM" id="CLU_014314_1_0_1"/>
<dbReference type="InParanoid" id="C8VSE8"/>
<dbReference type="Proteomes" id="UP000000560">
    <property type="component" value="Chromosome VIII"/>
</dbReference>
<proteinExistence type="predicted"/>
<protein>
    <recommendedName>
        <fullName>Putative uncharacterized protein AN10176</fullName>
    </recommendedName>
</protein>
<comment type="sequence caution" evidence="1">
    <conflict type="erroneous gene model prediction">
        <sequence resource="EMBL-CDS" id="EAA65882"/>
    </conflict>
    <text>The predicted gene AN1289 has been split into 2 genes: AN10176 and AN10171.</text>
</comment>